<accession>Q93MW7</accession>
<feature type="signal peptide" evidence="1">
    <location>
        <begin position="1"/>
        <end position="34"/>
    </location>
</feature>
<feature type="chain" id="PRO_0000292983" description="Lipase">
    <location>
        <begin position="35"/>
        <end position="268"/>
    </location>
</feature>
<feature type="active site" description="Nucleophile">
    <location>
        <position position="44"/>
    </location>
</feature>
<feature type="active site" evidence="8">
    <location>
        <position position="250"/>
    </location>
</feature>
<feature type="disulfide bond">
    <location>
        <begin position="61"/>
        <end position="86"/>
    </location>
</feature>
<feature type="disulfide bond">
    <location>
        <begin position="127"/>
        <end position="135"/>
    </location>
</feature>
<feature type="disulfide bond">
    <location>
        <begin position="185"/>
        <end position="232"/>
    </location>
</feature>
<feature type="strand" evidence="9">
    <location>
        <begin position="37"/>
        <end position="43"/>
    </location>
</feature>
<feature type="helix" evidence="9">
    <location>
        <begin position="44"/>
        <end position="47"/>
    </location>
</feature>
<feature type="turn" evidence="9">
    <location>
        <begin position="48"/>
        <end position="50"/>
    </location>
</feature>
<feature type="helix" evidence="9">
    <location>
        <begin position="56"/>
        <end position="61"/>
    </location>
</feature>
<feature type="helix" evidence="9">
    <location>
        <begin position="68"/>
        <end position="74"/>
    </location>
</feature>
<feature type="strand" evidence="9">
    <location>
        <begin position="80"/>
        <end position="83"/>
    </location>
</feature>
<feature type="helix" evidence="9">
    <location>
        <begin position="91"/>
        <end position="97"/>
    </location>
</feature>
<feature type="strand" evidence="9">
    <location>
        <begin position="108"/>
        <end position="112"/>
    </location>
</feature>
<feature type="turn" evidence="9">
    <location>
        <begin position="115"/>
        <end position="119"/>
    </location>
</feature>
<feature type="helix" evidence="9">
    <location>
        <begin position="120"/>
        <end position="130"/>
    </location>
</feature>
<feature type="helix" evidence="9">
    <location>
        <begin position="132"/>
        <end position="148"/>
    </location>
</feature>
<feature type="helix" evidence="9">
    <location>
        <begin position="150"/>
        <end position="164"/>
    </location>
</feature>
<feature type="strand" evidence="9">
    <location>
        <begin position="169"/>
        <end position="173"/>
    </location>
</feature>
<feature type="strand" evidence="9">
    <location>
        <begin position="187"/>
        <end position="189"/>
    </location>
</feature>
<feature type="helix" evidence="9">
    <location>
        <begin position="191"/>
        <end position="214"/>
    </location>
</feature>
<feature type="strand" evidence="9">
    <location>
        <begin position="218"/>
        <end position="220"/>
    </location>
</feature>
<feature type="helix" evidence="9">
    <location>
        <begin position="223"/>
        <end position="226"/>
    </location>
</feature>
<feature type="strand" evidence="9">
    <location>
        <begin position="233"/>
        <end position="235"/>
    </location>
</feature>
<feature type="helix" evidence="9">
    <location>
        <begin position="245"/>
        <end position="247"/>
    </location>
</feature>
<feature type="helix" evidence="9">
    <location>
        <begin position="253"/>
        <end position="258"/>
    </location>
</feature>
<feature type="helix" evidence="9">
    <location>
        <begin position="260"/>
        <end position="266"/>
    </location>
</feature>
<reference key="1">
    <citation type="journal article" date="2002" name="Arch. Microbiol.">
        <title>A novel streptomycete lipase: cloning, sequencing and high-level expression of the Streptomyces rimosus GDS(L)-lipase gene.</title>
        <authorList>
            <person name="Vujaklija D."/>
            <person name="Schroeder W."/>
            <person name="Abramic M."/>
            <person name="Zou P."/>
            <person name="Lescic I."/>
            <person name="Franke P."/>
            <person name="Pigac J."/>
        </authorList>
    </citation>
    <scope>NUCLEOTIDE SEQUENCE [GENOMIC DNA]</scope>
    <scope>PROTEIN SEQUENCE OF 35-55; 67-76; 81-90; 91-97; 98-109; 113-122; 146-152; 155-158; 181-191; 195-209; 212-223; 247-254 AND 259-268</scope>
    <source>
        <strain>R6</strain>
    </source>
</reference>
<reference key="2">
    <citation type="journal article" date="2004" name="Biol. Chem.">
        <title>Structural characterization of extracellular lipase from Streptomyces rimosus: assignment of disulfide bridge pattern by mass spectrometry.</title>
        <authorList>
            <person name="Lescic I."/>
            <person name="Zehl M."/>
            <person name="Mueller R."/>
            <person name="Vukelic B."/>
            <person name="Abramic M."/>
            <person name="Pigac J."/>
            <person name="Allmaier G."/>
            <person name="Kojic-Prodic B."/>
        </authorList>
    </citation>
    <scope>MASS SPECTROMETRY</scope>
    <scope>IDENTIFICATION OF DISULFIDE BONDS</scope>
    <source>
        <strain>R6</strain>
    </source>
</reference>
<reference key="3">
    <citation type="journal article" date="1999" name="Enzyme Microb. Technol.">
        <title>Purification and properties of extracellular lipase from Streptomyces rimosus.</title>
        <authorList>
            <person name="Abramic M."/>
            <person name="Lescic I."/>
            <person name="Korica T."/>
            <person name="Vitale L."/>
            <person name="Saenger W."/>
            <person name="Pigac J."/>
        </authorList>
    </citation>
    <scope>CHARACTERIZATION OF SUBSTRATE SPECIFICITY</scope>
    <scope>SUBCELLULAR LOCATION</scope>
    <scope>SUBUNIT</scope>
    <scope>BIOPHYSICOCHEMICAL PROPERTIES</scope>
    <scope>INHIBITION BY PHENYLMETHYLSULPHONYL FLUORIDE</scope>
    <source>
        <strain>R6</strain>
    </source>
</reference>
<reference key="4">
    <citation type="journal article" date="2001" name="Enzyme Microb. Technol.">
        <title>Substrate specificity and effects of water-miscible solvents on the activity and stability of extracellular lipase from Streptomyces rimosus.</title>
        <authorList>
            <person name="Lescic I."/>
            <person name="Vukelic B."/>
            <person name="Majeric-Elenkov M."/>
            <person name="Saenger W."/>
            <person name="Abramic M."/>
        </authorList>
    </citation>
    <scope>FUNCTION</scope>
    <scope>SUBSTRATE SPECIFICITY</scope>
    <scope>TRANSESTERIFICATION ACTIVITY</scope>
    <scope>ACTIVITY REGULATION</scope>
    <source>
        <strain>R6</strain>
    </source>
</reference>
<reference key="5">
    <citation type="journal article" date="2003" name="Food Technol. Biotechnol.">
        <title>Streptomyces rimosus GDS(L) Lipase: production, heterologous overexpression and structure-stability relationship.</title>
        <authorList>
            <person name="Vujaklija D."/>
            <person name="Abramic M."/>
            <person name="Lescic I."/>
            <person name="Marsic T."/>
            <person name="Pigac J."/>
        </authorList>
    </citation>
    <scope>FUNCTION</scope>
    <scope>CATALYTIC ACTIVITY</scope>
    <scope>INDUCTION</scope>
    <source>
        <strain>R6</strain>
    </source>
</reference>
<reference key="6">
    <citation type="journal article" date="2004" name="J. Mass Spectrom.">
        <title>Characterization of covalently inhibited extracellular lipase from Streptomyces rimosus by matrix-assisted laser desorption/ionization time-of-flight and matrix-assisted laser desorption/ionization quadrupole ion trap reflectron time-of-flight mass spectrometry: localization of the active site serine.</title>
        <authorList>
            <person name="Zehl M."/>
            <person name="Lescic I."/>
            <person name="Abramic M."/>
            <person name="Rizzi A."/>
            <person name="Kojic-Prodic B."/>
            <person name="Allmaier G."/>
        </authorList>
    </citation>
    <scope>IDENTIFICATION OF ACTIVE SITE SERINE</scope>
    <scope>MASS SPECTROMETRY</scope>
    <scope>INHIBITION BY 3,4-DICHLOROISOCOUMARIN</scope>
    <source>
        <strain>R6</strain>
    </source>
</reference>
<reference key="7">
    <citation type="journal article" date="2007" name="Biochim. Biophys. Acta">
        <title>Mass spectrometric evidence of covalently-bound tetrahydrolipstatin at the catalytic serine of Streptomyces rimosus lipase.</title>
        <authorList>
            <person name="Asler I.L."/>
            <person name="Zehl M."/>
            <person name="Kovacic F."/>
            <person name="Mueller R."/>
            <person name="Abramic M."/>
            <person name="Allmaier G."/>
            <person name="Kojic-Prodic B."/>
        </authorList>
    </citation>
    <scope>BINDING OF THE INHIBITOR TETRAHYDROLIPSTATIN (THL) TO ACTIVE SITE SERINE</scope>
    <source>
        <strain>R6</strain>
    </source>
</reference>
<reference key="8">
    <citation type="journal article" date="2010" name="ChemBioChem">
        <title>Probing enzyme promiscuity of SGNH hydrolases.</title>
        <authorList>
            <person name="Lescic Asler I."/>
            <person name="Ivic N."/>
            <person name="Kovacic F."/>
            <person name="Schell S."/>
            <person name="Knorr J."/>
            <person name="Krauss U."/>
            <person name="Wilhelm S."/>
            <person name="Kojic-Prodic B."/>
            <person name="Jaeger K.E."/>
        </authorList>
    </citation>
    <scope>FUNCTION</scope>
    <scope>CATALYTIC ACTIVITY</scope>
    <scope>SUBSTRATE SPECIFICITY</scope>
    <scope>KINETIC PARAMETERS</scope>
    <source>
        <strain>R6</strain>
    </source>
</reference>
<proteinExistence type="evidence at protein level"/>
<name>LIP_STRRM</name>
<sequence length="268" mass="27607">MRLSRRAATASALLLTPALALFGASAAVSAPRIQATDYVALGDSYSSGVGAGSYDSSSGSCKRSTKSYPALWAASHTGTRFNFTACSGARTGDVLAKQLTPVNSGTDLVSITIGGNDAGFADTMTTCNLQGESACLARIAKARAYIQQTLPAQLDQVYDAIDSRAPAAQVVVLGYPRFYKLGGSCAVGLSEKSRAAINAAADDINAVTAKRAADHGFAFGDVNTTFAGHELCSGAPWLHSVTLPVENSYHPTANGQSKGYLPVLNSAT</sequence>
<comment type="function">
    <text evidence="4 6 7">Catalyzes the hydrolysis of p-nitrophenyl esters, alpha- and beta-naphthyl esters, and triacylglycerols, with a preference for medium acyl chain length (C8-C12). Shows a much higher hydrolysis rate of glycerol esters of unsaturated C16 and C18 fatty acids than that of their saturated counterparts, and a preference for cis double bond. Is also able to hydrolyze several natural oils and Tween detergents. Also displays thioesterase and phospholipase activities, towards palmitoyl-coenzyme A and diheptanoyl glycerophosphocholine, respectively. Shows transesterification activity of racemic 1-phenyl ethanol with vinyl acetate in hexane, proceeding with partial (R)-enantioselectivity.</text>
</comment>
<comment type="catalytic activity">
    <reaction evidence="4 7">
        <text>a triacylglycerol + H2O = a diacylglycerol + a fatty acid + H(+)</text>
        <dbReference type="Rhea" id="RHEA:12044"/>
        <dbReference type="ChEBI" id="CHEBI:15377"/>
        <dbReference type="ChEBI" id="CHEBI:15378"/>
        <dbReference type="ChEBI" id="CHEBI:17855"/>
        <dbReference type="ChEBI" id="CHEBI:18035"/>
        <dbReference type="ChEBI" id="CHEBI:28868"/>
        <dbReference type="EC" id="3.1.1.3"/>
    </reaction>
</comment>
<comment type="catalytic activity">
    <reaction evidence="4">
        <text>hexadecanoyl-CoA + H2O = hexadecanoate + CoA + H(+)</text>
        <dbReference type="Rhea" id="RHEA:16645"/>
        <dbReference type="ChEBI" id="CHEBI:7896"/>
        <dbReference type="ChEBI" id="CHEBI:15377"/>
        <dbReference type="ChEBI" id="CHEBI:15378"/>
        <dbReference type="ChEBI" id="CHEBI:57287"/>
        <dbReference type="ChEBI" id="CHEBI:57379"/>
        <dbReference type="EC" id="3.1.2.2"/>
    </reaction>
</comment>
<comment type="activity regulation">
    <text evidence="6">Inhibited by 3,4-dichloroisocoumarin and tetrahydrolipstatin in the absence of substrate, but by phenylmethylsulfonyl fluoride (PMSF) only in the presence of substrate. Several water-miscible solvents enhance the lipase hydrolytic activity in vitro. Tetrahydrofuran and N,N-dimethylformamide (both 50%) inactivate the enzyme with t1/2 of 5 minutes and t1/2 of 2 hours, respectively.</text>
</comment>
<comment type="biophysicochemical properties">
    <phDependence>
        <text evidence="5">Optimum pH is 9.5.</text>
    </phDependence>
    <temperatureDependence>
        <text evidence="5">Optimum temperature is 55 degrees Celsius at pH 8.0.</text>
    </temperatureDependence>
</comment>
<comment type="subunit">
    <text evidence="5">Monomer.</text>
</comment>
<comment type="subcellular location">
    <subcellularLocation>
        <location evidence="5">Secreted</location>
    </subcellularLocation>
</comment>
<comment type="induction">
    <text evidence="7">Expressed once the cells enter stationary phase, with a maximum at the late stationary phase.</text>
</comment>
<comment type="mass spectrometry" mass="24165.87" error="1.14" method="MALDI" evidence="3">
    <text>Value for wild-type lipase.</text>
</comment>
<comment type="mass spectrometry" mass="24166.01" error="1.16" method="MALDI" evidence="3">
    <text>Value for lipase overexpressed in S.rimosus.</text>
</comment>
<comment type="mass spectrometry" mass="24166.0" error="1.2" method="MALDI" evidence="2"/>
<comment type="similarity">
    <text evidence="8">Belongs to the 'GDSL' lipolytic enzyme family.</text>
</comment>
<comment type="caution">
    <text evidence="8">In PubMed:17137716 the protein has been overexpressed in S.lividans, where it is incorrectly processed and has 2 additional N-terminal amino acids.</text>
</comment>
<keyword id="KW-0002">3D-structure</keyword>
<keyword id="KW-0903">Direct protein sequencing</keyword>
<keyword id="KW-1015">Disulfide bond</keyword>
<keyword id="KW-0378">Hydrolase</keyword>
<keyword id="KW-0442">Lipid degradation</keyword>
<keyword id="KW-0443">Lipid metabolism</keyword>
<keyword id="KW-0964">Secreted</keyword>
<keyword id="KW-0719">Serine esterase</keyword>
<keyword id="KW-0732">Signal</keyword>
<protein>
    <recommendedName>
        <fullName>Lipase</fullName>
        <ecNumber evidence="4 7">3.1.1.3</ecNumber>
    </recommendedName>
    <alternativeName>
        <fullName>Diheptanoyl glycerophosphocholine esterase</fullName>
        <ecNumber>3.1.1.-</ecNumber>
    </alternativeName>
    <alternativeName>
        <fullName>Extracellular lipase</fullName>
    </alternativeName>
    <alternativeName>
        <fullName>GDSL-like lipase</fullName>
    </alternativeName>
    <alternativeName>
        <fullName>Palmitoyl-CoA hydrolase</fullName>
        <ecNumber evidence="4">3.1.2.2</ecNumber>
    </alternativeName>
    <alternativeName>
        <fullName>SRL</fullName>
    </alternativeName>
</protein>
<organism>
    <name type="scientific">Streptomyces rimosus</name>
    <dbReference type="NCBI Taxonomy" id="1927"/>
    <lineage>
        <taxon>Bacteria</taxon>
        <taxon>Bacillati</taxon>
        <taxon>Actinomycetota</taxon>
        <taxon>Actinomycetes</taxon>
        <taxon>Kitasatosporales</taxon>
        <taxon>Streptomycetaceae</taxon>
        <taxon>Streptomyces</taxon>
    </lineage>
</organism>
<evidence type="ECO:0000269" key="1">
    <source>
    </source>
</evidence>
<evidence type="ECO:0000269" key="2">
    <source>
    </source>
</evidence>
<evidence type="ECO:0000269" key="3">
    <source>
    </source>
</evidence>
<evidence type="ECO:0000269" key="4">
    <source>
    </source>
</evidence>
<evidence type="ECO:0000269" key="5">
    <source ref="3"/>
</evidence>
<evidence type="ECO:0000269" key="6">
    <source ref="4"/>
</evidence>
<evidence type="ECO:0000269" key="7">
    <source ref="5"/>
</evidence>
<evidence type="ECO:0000305" key="8"/>
<evidence type="ECO:0007829" key="9">
    <source>
        <dbReference type="PDB" id="5MAL"/>
    </source>
</evidence>
<dbReference type="EC" id="3.1.1.3" evidence="4 7"/>
<dbReference type="EC" id="3.1.1.-"/>
<dbReference type="EC" id="3.1.2.2" evidence="4"/>
<dbReference type="EMBL" id="AF394224">
    <property type="protein sequence ID" value="AAK84028.1"/>
    <property type="molecule type" value="Genomic_DNA"/>
</dbReference>
<dbReference type="RefSeq" id="WP_003986773.1">
    <property type="nucleotide sequence ID" value="NZ_SADA01000186.1"/>
</dbReference>
<dbReference type="PDB" id="5MAL">
    <property type="method" value="X-ray"/>
    <property type="resolution" value="1.71 A"/>
    <property type="chains" value="A/B=35-268"/>
</dbReference>
<dbReference type="PDBsum" id="5MAL"/>
<dbReference type="SMR" id="Q93MW7"/>
<dbReference type="GeneID" id="66853929"/>
<dbReference type="OMA" id="QNSYHPN"/>
<dbReference type="GO" id="GO:0005576">
    <property type="term" value="C:extracellular region"/>
    <property type="evidence" value="ECO:0007669"/>
    <property type="project" value="UniProtKB-SubCell"/>
</dbReference>
<dbReference type="GO" id="GO:0106435">
    <property type="term" value="F:carboxylesterase activity"/>
    <property type="evidence" value="ECO:0000314"/>
    <property type="project" value="UniProtKB"/>
</dbReference>
<dbReference type="GO" id="GO:0052816">
    <property type="term" value="F:long-chain fatty acyl-CoA hydrolase activity"/>
    <property type="evidence" value="ECO:0000314"/>
    <property type="project" value="UniProtKB"/>
</dbReference>
<dbReference type="GO" id="GO:0004620">
    <property type="term" value="F:phospholipase activity"/>
    <property type="evidence" value="ECO:0000314"/>
    <property type="project" value="UniProtKB"/>
</dbReference>
<dbReference type="GO" id="GO:0004806">
    <property type="term" value="F:triacylglycerol lipase activity"/>
    <property type="evidence" value="ECO:0000314"/>
    <property type="project" value="UniProtKB"/>
</dbReference>
<dbReference type="GO" id="GO:0019433">
    <property type="term" value="P:triglyceride catabolic process"/>
    <property type="evidence" value="ECO:0007669"/>
    <property type="project" value="TreeGrafter"/>
</dbReference>
<dbReference type="CDD" id="cd01823">
    <property type="entry name" value="SEST_like"/>
    <property type="match status" value="1"/>
</dbReference>
<dbReference type="FunFam" id="3.40.50.1110:FF:000018">
    <property type="entry name" value="Lipase 1"/>
    <property type="match status" value="1"/>
</dbReference>
<dbReference type="Gene3D" id="3.40.50.1110">
    <property type="entry name" value="SGNH hydrolase"/>
    <property type="match status" value="1"/>
</dbReference>
<dbReference type="InterPro" id="IPR037460">
    <property type="entry name" value="SEST-like"/>
</dbReference>
<dbReference type="InterPro" id="IPR013830">
    <property type="entry name" value="SGNH_hydro"/>
</dbReference>
<dbReference type="InterPro" id="IPR036514">
    <property type="entry name" value="SGNH_hydro_sf"/>
</dbReference>
<dbReference type="PANTHER" id="PTHR37981">
    <property type="entry name" value="LIPASE 2"/>
    <property type="match status" value="1"/>
</dbReference>
<dbReference type="PANTHER" id="PTHR37981:SF1">
    <property type="entry name" value="SGNH HYDROLASE-TYPE ESTERASE DOMAIN-CONTAINING PROTEIN"/>
    <property type="match status" value="1"/>
</dbReference>
<dbReference type="Pfam" id="PF13472">
    <property type="entry name" value="Lipase_GDSL_2"/>
    <property type="match status" value="1"/>
</dbReference>
<dbReference type="SUPFAM" id="SSF52266">
    <property type="entry name" value="SGNH hydrolase"/>
    <property type="match status" value="1"/>
</dbReference>